<name>RL2_ANADE</name>
<gene>
    <name evidence="1" type="primary">rplB</name>
    <name type="ordered locus">Adeh_1943</name>
</gene>
<dbReference type="EMBL" id="CP000251">
    <property type="protein sequence ID" value="ABC81714.1"/>
    <property type="molecule type" value="Genomic_DNA"/>
</dbReference>
<dbReference type="RefSeq" id="WP_011420997.1">
    <property type="nucleotide sequence ID" value="NC_007760.1"/>
</dbReference>
<dbReference type="SMR" id="Q2IJ88"/>
<dbReference type="STRING" id="290397.Adeh_1943"/>
<dbReference type="KEGG" id="ade:Adeh_1943"/>
<dbReference type="eggNOG" id="COG0090">
    <property type="taxonomic scope" value="Bacteria"/>
</dbReference>
<dbReference type="HOGENOM" id="CLU_036235_2_1_7"/>
<dbReference type="OrthoDB" id="9778722at2"/>
<dbReference type="Proteomes" id="UP000001935">
    <property type="component" value="Chromosome"/>
</dbReference>
<dbReference type="GO" id="GO:0015934">
    <property type="term" value="C:large ribosomal subunit"/>
    <property type="evidence" value="ECO:0007669"/>
    <property type="project" value="InterPro"/>
</dbReference>
<dbReference type="GO" id="GO:0019843">
    <property type="term" value="F:rRNA binding"/>
    <property type="evidence" value="ECO:0007669"/>
    <property type="project" value="UniProtKB-UniRule"/>
</dbReference>
<dbReference type="GO" id="GO:0003735">
    <property type="term" value="F:structural constituent of ribosome"/>
    <property type="evidence" value="ECO:0007669"/>
    <property type="project" value="InterPro"/>
</dbReference>
<dbReference type="GO" id="GO:0016740">
    <property type="term" value="F:transferase activity"/>
    <property type="evidence" value="ECO:0007669"/>
    <property type="project" value="InterPro"/>
</dbReference>
<dbReference type="GO" id="GO:0002181">
    <property type="term" value="P:cytoplasmic translation"/>
    <property type="evidence" value="ECO:0007669"/>
    <property type="project" value="TreeGrafter"/>
</dbReference>
<dbReference type="FunFam" id="2.30.30.30:FF:000001">
    <property type="entry name" value="50S ribosomal protein L2"/>
    <property type="match status" value="1"/>
</dbReference>
<dbReference type="FunFam" id="2.40.50.140:FF:000003">
    <property type="entry name" value="50S ribosomal protein L2"/>
    <property type="match status" value="1"/>
</dbReference>
<dbReference type="FunFam" id="4.10.950.10:FF:000001">
    <property type="entry name" value="50S ribosomal protein L2"/>
    <property type="match status" value="1"/>
</dbReference>
<dbReference type="Gene3D" id="2.30.30.30">
    <property type="match status" value="1"/>
</dbReference>
<dbReference type="Gene3D" id="2.40.50.140">
    <property type="entry name" value="Nucleic acid-binding proteins"/>
    <property type="match status" value="1"/>
</dbReference>
<dbReference type="Gene3D" id="4.10.950.10">
    <property type="entry name" value="Ribosomal protein L2, domain 3"/>
    <property type="match status" value="1"/>
</dbReference>
<dbReference type="HAMAP" id="MF_01320_B">
    <property type="entry name" value="Ribosomal_uL2_B"/>
    <property type="match status" value="1"/>
</dbReference>
<dbReference type="InterPro" id="IPR012340">
    <property type="entry name" value="NA-bd_OB-fold"/>
</dbReference>
<dbReference type="InterPro" id="IPR014722">
    <property type="entry name" value="Rib_uL2_dom2"/>
</dbReference>
<dbReference type="InterPro" id="IPR002171">
    <property type="entry name" value="Ribosomal_uL2"/>
</dbReference>
<dbReference type="InterPro" id="IPR005880">
    <property type="entry name" value="Ribosomal_uL2_bac/org-type"/>
</dbReference>
<dbReference type="InterPro" id="IPR022669">
    <property type="entry name" value="Ribosomal_uL2_C"/>
</dbReference>
<dbReference type="InterPro" id="IPR014726">
    <property type="entry name" value="Ribosomal_uL2_dom3"/>
</dbReference>
<dbReference type="InterPro" id="IPR022666">
    <property type="entry name" value="Ribosomal_uL2_RNA-bd_dom"/>
</dbReference>
<dbReference type="InterPro" id="IPR008991">
    <property type="entry name" value="Translation_prot_SH3-like_sf"/>
</dbReference>
<dbReference type="NCBIfam" id="TIGR01171">
    <property type="entry name" value="rplB_bact"/>
    <property type="match status" value="1"/>
</dbReference>
<dbReference type="PANTHER" id="PTHR13691:SF5">
    <property type="entry name" value="LARGE RIBOSOMAL SUBUNIT PROTEIN UL2M"/>
    <property type="match status" value="1"/>
</dbReference>
<dbReference type="PANTHER" id="PTHR13691">
    <property type="entry name" value="RIBOSOMAL PROTEIN L2"/>
    <property type="match status" value="1"/>
</dbReference>
<dbReference type="Pfam" id="PF00181">
    <property type="entry name" value="Ribosomal_L2"/>
    <property type="match status" value="1"/>
</dbReference>
<dbReference type="Pfam" id="PF03947">
    <property type="entry name" value="Ribosomal_L2_C"/>
    <property type="match status" value="1"/>
</dbReference>
<dbReference type="PIRSF" id="PIRSF002158">
    <property type="entry name" value="Ribosomal_L2"/>
    <property type="match status" value="1"/>
</dbReference>
<dbReference type="SMART" id="SM01383">
    <property type="entry name" value="Ribosomal_L2"/>
    <property type="match status" value="1"/>
</dbReference>
<dbReference type="SMART" id="SM01382">
    <property type="entry name" value="Ribosomal_L2_C"/>
    <property type="match status" value="1"/>
</dbReference>
<dbReference type="SUPFAM" id="SSF50249">
    <property type="entry name" value="Nucleic acid-binding proteins"/>
    <property type="match status" value="1"/>
</dbReference>
<dbReference type="SUPFAM" id="SSF50104">
    <property type="entry name" value="Translation proteins SH3-like domain"/>
    <property type="match status" value="1"/>
</dbReference>
<comment type="function">
    <text evidence="1">One of the primary rRNA binding proteins. Required for association of the 30S and 50S subunits to form the 70S ribosome, for tRNA binding and peptide bond formation. It has been suggested to have peptidyltransferase activity; this is somewhat controversial. Makes several contacts with the 16S rRNA in the 70S ribosome.</text>
</comment>
<comment type="subunit">
    <text evidence="1">Part of the 50S ribosomal subunit. Forms a bridge to the 30S subunit in the 70S ribosome.</text>
</comment>
<comment type="similarity">
    <text evidence="1">Belongs to the universal ribosomal protein uL2 family.</text>
</comment>
<proteinExistence type="inferred from homology"/>
<organism>
    <name type="scientific">Anaeromyxobacter dehalogenans (strain 2CP-C)</name>
    <dbReference type="NCBI Taxonomy" id="290397"/>
    <lineage>
        <taxon>Bacteria</taxon>
        <taxon>Pseudomonadati</taxon>
        <taxon>Myxococcota</taxon>
        <taxon>Myxococcia</taxon>
        <taxon>Myxococcales</taxon>
        <taxon>Cystobacterineae</taxon>
        <taxon>Anaeromyxobacteraceae</taxon>
        <taxon>Anaeromyxobacter</taxon>
    </lineage>
</organism>
<reference key="1">
    <citation type="submission" date="2006-01" db="EMBL/GenBank/DDBJ databases">
        <title>Complete sequence of Anaeromyxobacter dehalogenans 2CP-C.</title>
        <authorList>
            <person name="Copeland A."/>
            <person name="Lucas S."/>
            <person name="Lapidus A."/>
            <person name="Barry K."/>
            <person name="Detter J.C."/>
            <person name="Glavina T."/>
            <person name="Hammon N."/>
            <person name="Israni S."/>
            <person name="Pitluck S."/>
            <person name="Brettin T."/>
            <person name="Bruce D."/>
            <person name="Han C."/>
            <person name="Tapia R."/>
            <person name="Gilna P."/>
            <person name="Kiss H."/>
            <person name="Schmutz J."/>
            <person name="Larimer F."/>
            <person name="Land M."/>
            <person name="Kyrpides N."/>
            <person name="Anderson I."/>
            <person name="Sanford R.A."/>
            <person name="Ritalahti K.M."/>
            <person name="Thomas H.S."/>
            <person name="Kirby J.R."/>
            <person name="Zhulin I.B."/>
            <person name="Loeffler F.E."/>
            <person name="Richardson P."/>
        </authorList>
    </citation>
    <scope>NUCLEOTIDE SEQUENCE [LARGE SCALE GENOMIC DNA]</scope>
    <source>
        <strain>2CP-C</strain>
    </source>
</reference>
<evidence type="ECO:0000255" key="1">
    <source>
        <dbReference type="HAMAP-Rule" id="MF_01320"/>
    </source>
</evidence>
<evidence type="ECO:0000256" key="2">
    <source>
        <dbReference type="SAM" id="MobiDB-lite"/>
    </source>
</evidence>
<evidence type="ECO:0000305" key="3"/>
<accession>Q2IJ88</accession>
<protein>
    <recommendedName>
        <fullName evidence="1">Large ribosomal subunit protein uL2</fullName>
    </recommendedName>
    <alternativeName>
        <fullName evidence="3">50S ribosomal protein L2</fullName>
    </alternativeName>
</protein>
<keyword id="KW-1185">Reference proteome</keyword>
<keyword id="KW-0687">Ribonucleoprotein</keyword>
<keyword id="KW-0689">Ribosomal protein</keyword>
<keyword id="KW-0694">RNA-binding</keyword>
<keyword id="KW-0699">rRNA-binding</keyword>
<feature type="chain" id="PRO_0000237144" description="Large ribosomal subunit protein uL2">
    <location>
        <begin position="1"/>
        <end position="282"/>
    </location>
</feature>
<feature type="region of interest" description="Disordered" evidence="2">
    <location>
        <begin position="31"/>
        <end position="55"/>
    </location>
</feature>
<feature type="region of interest" description="Disordered" evidence="2">
    <location>
        <begin position="223"/>
        <end position="282"/>
    </location>
</feature>
<feature type="compositionally biased region" description="Basic residues" evidence="2">
    <location>
        <begin position="34"/>
        <end position="55"/>
    </location>
</feature>
<feature type="compositionally biased region" description="Basic residues" evidence="2">
    <location>
        <begin position="270"/>
        <end position="282"/>
    </location>
</feature>
<sequence length="282" mass="30707">MALKEYKPTSPARRHMTVADFAEITKAKPEKRLTKPVRKSGGRNAHGKVTTRHIGGGHKRRYRVIDWRRDKDGVPAKVAAIEYDPNRTARIALLHYLDGEKRYILAPVGVAVGDTLVSGADVDIRPGNALPVRTIPLGTVIHNVETAPGSGAKMIRTAGSFGQLMAKEGGYAQIRLPSGEVRKVLQDCKATIGQLGNVESSSVRVGKAGKSRWLGIRPTVRGLAMNPVDHPHGGGEGKSGQGNPHPVSPWGQKTKGLKTRNNRRTDKFIVTRRRPGVRNTQR</sequence>